<evidence type="ECO:0000250" key="1"/>
<evidence type="ECO:0000255" key="2"/>
<evidence type="ECO:0000256" key="3">
    <source>
        <dbReference type="SAM" id="MobiDB-lite"/>
    </source>
</evidence>
<evidence type="ECO:0000305" key="4"/>
<organism>
    <name type="scientific">Neosartorya fischeri (strain ATCC 1020 / DSM 3700 / CBS 544.65 / FGSC A1164 / JCM 1740 / NRRL 181 / WB 181)</name>
    <name type="common">Aspergillus fischerianus</name>
    <dbReference type="NCBI Taxonomy" id="331117"/>
    <lineage>
        <taxon>Eukaryota</taxon>
        <taxon>Fungi</taxon>
        <taxon>Dikarya</taxon>
        <taxon>Ascomycota</taxon>
        <taxon>Pezizomycotina</taxon>
        <taxon>Eurotiomycetes</taxon>
        <taxon>Eurotiomycetidae</taxon>
        <taxon>Eurotiales</taxon>
        <taxon>Aspergillaceae</taxon>
        <taxon>Aspergillus</taxon>
        <taxon>Aspergillus subgen. Fumigati</taxon>
    </lineage>
</organism>
<reference key="1">
    <citation type="journal article" date="2008" name="PLoS Genet.">
        <title>Genomic islands in the pathogenic filamentous fungus Aspergillus fumigatus.</title>
        <authorList>
            <person name="Fedorova N.D."/>
            <person name="Khaldi N."/>
            <person name="Joardar V.S."/>
            <person name="Maiti R."/>
            <person name="Amedeo P."/>
            <person name="Anderson M.J."/>
            <person name="Crabtree J."/>
            <person name="Silva J.C."/>
            <person name="Badger J.H."/>
            <person name="Albarraq A."/>
            <person name="Angiuoli S."/>
            <person name="Bussey H."/>
            <person name="Bowyer P."/>
            <person name="Cotty P.J."/>
            <person name="Dyer P.S."/>
            <person name="Egan A."/>
            <person name="Galens K."/>
            <person name="Fraser-Liggett C.M."/>
            <person name="Haas B.J."/>
            <person name="Inman J.M."/>
            <person name="Kent R."/>
            <person name="Lemieux S."/>
            <person name="Malavazi I."/>
            <person name="Orvis J."/>
            <person name="Roemer T."/>
            <person name="Ronning C.M."/>
            <person name="Sundaram J.P."/>
            <person name="Sutton G."/>
            <person name="Turner G."/>
            <person name="Venter J.C."/>
            <person name="White O.R."/>
            <person name="Whitty B.R."/>
            <person name="Youngman P."/>
            <person name="Wolfe K.H."/>
            <person name="Goldman G.H."/>
            <person name="Wortman J.R."/>
            <person name="Jiang B."/>
            <person name="Denning D.W."/>
            <person name="Nierman W.C."/>
        </authorList>
    </citation>
    <scope>NUCLEOTIDE SEQUENCE [LARGE SCALE GENOMIC DNA]</scope>
    <source>
        <strain>ATCC 1020 / DSM 3700 / CBS 544.65 / FGSC A1164 / JCM 1740 / NRRL 181 / WB 181</strain>
    </source>
</reference>
<name>LOC1_NEOFI</name>
<sequence>MAPNKPSVKGKSSSKGDSGKSKPLSSASKVSKKNAKRPPPKEVKSKARTESSLLKKTKKREYTEEELGLPKLNMITPVGVVKPKGKKKGKVFVDDQEGMMTILAMVNAEQEGHIESKLQKARQLEEIREAKRKEAEARHAEKKNKLEEAKQSIRQKRKRKSSGNEDSKSDASTSKSDSKSKGKRKSVSFA</sequence>
<accession>A1DLV0</accession>
<gene>
    <name type="primary">loc1</name>
    <name type="ORF">NFIA_051160</name>
</gene>
<comment type="function">
    <text evidence="1">Required for efficient assembly and nuclear export of the 60S ribosomal subunit.</text>
</comment>
<comment type="subunit">
    <text evidence="1">Component of the 66S pre-ribosomal particle.</text>
</comment>
<comment type="subcellular location">
    <subcellularLocation>
        <location evidence="1">Nucleus</location>
        <location evidence="1">Nucleolus</location>
    </subcellularLocation>
</comment>
<comment type="similarity">
    <text evidence="4">Belongs to the LOC1 family.</text>
</comment>
<dbReference type="EMBL" id="DS027698">
    <property type="protein sequence ID" value="EAW15771.1"/>
    <property type="molecule type" value="Genomic_DNA"/>
</dbReference>
<dbReference type="RefSeq" id="XP_001257668.1">
    <property type="nucleotide sequence ID" value="XM_001257667.1"/>
</dbReference>
<dbReference type="SMR" id="A1DLV0"/>
<dbReference type="STRING" id="331117.A1DLV0"/>
<dbReference type="EnsemblFungi" id="EAW15771">
    <property type="protein sequence ID" value="EAW15771"/>
    <property type="gene ID" value="NFIA_051160"/>
</dbReference>
<dbReference type="GeneID" id="4584183"/>
<dbReference type="KEGG" id="nfi:NFIA_051160"/>
<dbReference type="VEuPathDB" id="FungiDB:NFIA_051160"/>
<dbReference type="eggNOG" id="ENOG502RY6R">
    <property type="taxonomic scope" value="Eukaryota"/>
</dbReference>
<dbReference type="HOGENOM" id="CLU_096593_0_0_1"/>
<dbReference type="OMA" id="NAEQEGH"/>
<dbReference type="OrthoDB" id="1743802at2759"/>
<dbReference type="Proteomes" id="UP000006702">
    <property type="component" value="Unassembled WGS sequence"/>
</dbReference>
<dbReference type="GO" id="GO:0005730">
    <property type="term" value="C:nucleolus"/>
    <property type="evidence" value="ECO:0007669"/>
    <property type="project" value="UniProtKB-SubCell"/>
</dbReference>
<dbReference type="GO" id="GO:0030687">
    <property type="term" value="C:preribosome, large subunit precursor"/>
    <property type="evidence" value="ECO:0007669"/>
    <property type="project" value="TreeGrafter"/>
</dbReference>
<dbReference type="GO" id="GO:0003729">
    <property type="term" value="F:mRNA binding"/>
    <property type="evidence" value="ECO:0007669"/>
    <property type="project" value="InterPro"/>
</dbReference>
<dbReference type="GO" id="GO:0008298">
    <property type="term" value="P:intracellular mRNA localization"/>
    <property type="evidence" value="ECO:0007669"/>
    <property type="project" value="TreeGrafter"/>
</dbReference>
<dbReference type="GO" id="GO:0051028">
    <property type="term" value="P:mRNA transport"/>
    <property type="evidence" value="ECO:0007669"/>
    <property type="project" value="UniProtKB-KW"/>
</dbReference>
<dbReference type="GO" id="GO:0042273">
    <property type="term" value="P:ribosomal large subunit biogenesis"/>
    <property type="evidence" value="ECO:0007669"/>
    <property type="project" value="InterPro"/>
</dbReference>
<dbReference type="InterPro" id="IPR037650">
    <property type="entry name" value="Loc1"/>
</dbReference>
<dbReference type="PANTHER" id="PTHR28028">
    <property type="entry name" value="60S RIBOSOMAL SUBUNIT ASSEMBLY/EXPORT PROTEIN LOC1"/>
    <property type="match status" value="1"/>
</dbReference>
<dbReference type="PANTHER" id="PTHR28028:SF1">
    <property type="entry name" value="60S RIBOSOMAL SUBUNIT ASSEMBLY_EXPORT PROTEIN LOC1"/>
    <property type="match status" value="1"/>
</dbReference>
<feature type="chain" id="PRO_0000308798" description="60S ribosomal subunit assembly/export protein loc1">
    <location>
        <begin position="1"/>
        <end position="190"/>
    </location>
</feature>
<feature type="region of interest" description="Disordered" evidence="3">
    <location>
        <begin position="1"/>
        <end position="70"/>
    </location>
</feature>
<feature type="region of interest" description="Disordered" evidence="3">
    <location>
        <begin position="129"/>
        <end position="190"/>
    </location>
</feature>
<feature type="coiled-coil region" evidence="2">
    <location>
        <begin position="109"/>
        <end position="165"/>
    </location>
</feature>
<feature type="compositionally biased region" description="Low complexity" evidence="3">
    <location>
        <begin position="1"/>
        <end position="29"/>
    </location>
</feature>
<feature type="compositionally biased region" description="Basic and acidic residues" evidence="3">
    <location>
        <begin position="39"/>
        <end position="49"/>
    </location>
</feature>
<feature type="compositionally biased region" description="Basic and acidic residues" evidence="3">
    <location>
        <begin position="129"/>
        <end position="151"/>
    </location>
</feature>
<feature type="compositionally biased region" description="Basic residues" evidence="3">
    <location>
        <begin position="181"/>
        <end position="190"/>
    </location>
</feature>
<proteinExistence type="inferred from homology"/>
<keyword id="KW-0175">Coiled coil</keyword>
<keyword id="KW-0509">mRNA transport</keyword>
<keyword id="KW-0539">Nucleus</keyword>
<keyword id="KW-1185">Reference proteome</keyword>
<keyword id="KW-0690">Ribosome biogenesis</keyword>
<keyword id="KW-0813">Transport</keyword>
<protein>
    <recommendedName>
        <fullName>60S ribosomal subunit assembly/export protein loc1</fullName>
    </recommendedName>
</protein>